<organism>
    <name type="scientific">Argentina anserina</name>
    <name type="common">Silverweed cinquefoil</name>
    <name type="synonym">Potentilla anserina</name>
    <dbReference type="NCBI Taxonomy" id="57926"/>
    <lineage>
        <taxon>Eukaryota</taxon>
        <taxon>Viridiplantae</taxon>
        <taxon>Streptophyta</taxon>
        <taxon>Embryophyta</taxon>
        <taxon>Tracheophyta</taxon>
        <taxon>Spermatophyta</taxon>
        <taxon>Magnoliopsida</taxon>
        <taxon>eudicotyledons</taxon>
        <taxon>Gunneridae</taxon>
        <taxon>Pentapetalae</taxon>
        <taxon>rosids</taxon>
        <taxon>fabids</taxon>
        <taxon>Rosales</taxon>
        <taxon>Rosaceae</taxon>
        <taxon>Rosoideae</taxon>
        <taxon>Potentilleae</taxon>
        <taxon>Potentilleae incertae sedis</taxon>
        <taxon>Argentina</taxon>
    </lineage>
</organism>
<protein>
    <recommendedName>
        <fullName evidence="1">Maturase K</fullName>
    </recommendedName>
    <alternativeName>
        <fullName evidence="1">Intron maturase</fullName>
    </alternativeName>
</protein>
<evidence type="ECO:0000255" key="1">
    <source>
        <dbReference type="HAMAP-Rule" id="MF_01390"/>
    </source>
</evidence>
<comment type="function">
    <text evidence="1">Usually encoded in the trnK tRNA gene intron. Probably assists in splicing its own and other chloroplast group II introns.</text>
</comment>
<comment type="subcellular location">
    <subcellularLocation>
        <location>Plastid</location>
        <location>Chloroplast</location>
    </subcellularLocation>
</comment>
<comment type="similarity">
    <text evidence="1">Belongs to the intron maturase 2 family. MatK subfamily.</text>
</comment>
<accession>Q8WJP5</accession>
<geneLocation type="chloroplast"/>
<proteinExistence type="inferred from homology"/>
<gene>
    <name evidence="1" type="primary">matK</name>
</gene>
<name>MATK_ARGAN</name>
<sequence length="500" mass="59400">MEDFQVYFELYRSQQHDLLYPLIFRESIYALAHDRGLNRSVLLDNVGYDKKASLLIIKRLISRMYQQNRFIISFNDSNQNKFLGYNKNLYSQMISEGFAVIVEIPFSLRLVSSLEETETVKSYNLRSIHSIFPFLEDKFPHLNYASDVLIPYPIHLEILVQTLRYCMKDPSSLHLLRLFLYEYYSWNTVITPKKSLFAKRNQRLFLLLYNSYVGEYESILLFLRNQSNHLRLTSFRIFFERIRFYEKIKYPVEEVLFPATLWFFKDPFIQYVSYQGKSILASKDTPLLMTKWKYYLVNFWQCHFYVWSQPGRIHINQLFKYSFDFLGYLSSIRPNISVVRSQLLENSFLMNNLMKKLDTLFPTIPMIGSLAKVKFCNTLGHPISKSSWADLSDSDIIGRFVRIGGNLSHYYSGSSKKKSLYRIKYILRLSCVKTLARKHKSTVRTFLKRLGPKLLDEFFTEEEQVFALLFPRTSSTSKRLYRGQIWYLDILCINDLVNHE</sequence>
<keyword id="KW-0150">Chloroplast</keyword>
<keyword id="KW-0507">mRNA processing</keyword>
<keyword id="KW-0934">Plastid</keyword>
<keyword id="KW-0694">RNA-binding</keyword>
<keyword id="KW-0819">tRNA processing</keyword>
<feature type="chain" id="PRO_0000143647" description="Maturase K">
    <location>
        <begin position="1"/>
        <end position="500"/>
    </location>
</feature>
<dbReference type="EMBL" id="AF288113">
    <property type="protein sequence ID" value="AAL36007.1"/>
    <property type="molecule type" value="Genomic_DNA"/>
</dbReference>
<dbReference type="GO" id="GO:0009507">
    <property type="term" value="C:chloroplast"/>
    <property type="evidence" value="ECO:0007669"/>
    <property type="project" value="UniProtKB-SubCell"/>
</dbReference>
<dbReference type="GO" id="GO:0003723">
    <property type="term" value="F:RNA binding"/>
    <property type="evidence" value="ECO:0007669"/>
    <property type="project" value="UniProtKB-KW"/>
</dbReference>
<dbReference type="GO" id="GO:0006397">
    <property type="term" value="P:mRNA processing"/>
    <property type="evidence" value="ECO:0007669"/>
    <property type="project" value="UniProtKB-KW"/>
</dbReference>
<dbReference type="GO" id="GO:0008380">
    <property type="term" value="P:RNA splicing"/>
    <property type="evidence" value="ECO:0007669"/>
    <property type="project" value="UniProtKB-UniRule"/>
</dbReference>
<dbReference type="GO" id="GO:0008033">
    <property type="term" value="P:tRNA processing"/>
    <property type="evidence" value="ECO:0007669"/>
    <property type="project" value="UniProtKB-KW"/>
</dbReference>
<dbReference type="HAMAP" id="MF_01390">
    <property type="entry name" value="MatK"/>
    <property type="match status" value="1"/>
</dbReference>
<dbReference type="InterPro" id="IPR024937">
    <property type="entry name" value="Domain_X"/>
</dbReference>
<dbReference type="InterPro" id="IPR002866">
    <property type="entry name" value="Maturase_MatK"/>
</dbReference>
<dbReference type="InterPro" id="IPR024942">
    <property type="entry name" value="Maturase_MatK_N"/>
</dbReference>
<dbReference type="PANTHER" id="PTHR34811">
    <property type="entry name" value="MATURASE K"/>
    <property type="match status" value="1"/>
</dbReference>
<dbReference type="PANTHER" id="PTHR34811:SF1">
    <property type="entry name" value="MATURASE K"/>
    <property type="match status" value="1"/>
</dbReference>
<dbReference type="Pfam" id="PF01348">
    <property type="entry name" value="Intron_maturas2"/>
    <property type="match status" value="1"/>
</dbReference>
<dbReference type="Pfam" id="PF01824">
    <property type="entry name" value="MatK_N"/>
    <property type="match status" value="1"/>
</dbReference>
<reference key="1">
    <citation type="journal article" date="2002" name="Plant Syst. Evol.">
        <title>Phylogenetic relationships in Rosaceae inferred from chloroplast matK and trnL-trnF nucleotide sequence data.</title>
        <authorList>
            <person name="Potter D."/>
            <person name="Gao F."/>
            <person name="Bortiri P.E."/>
            <person name="Oh S.-H."/>
            <person name="Baggett S."/>
        </authorList>
    </citation>
    <scope>NUCLEOTIDE SEQUENCE [GENOMIC DNA]</scope>
</reference>